<organism>
    <name type="scientific">Klebsiella pneumoniae</name>
    <dbReference type="NCBI Taxonomy" id="573"/>
    <lineage>
        <taxon>Bacteria</taxon>
        <taxon>Pseudomonadati</taxon>
        <taxon>Pseudomonadota</taxon>
        <taxon>Gammaproteobacteria</taxon>
        <taxon>Enterobacterales</taxon>
        <taxon>Enterobacteriaceae</taxon>
        <taxon>Klebsiella/Raoultella group</taxon>
        <taxon>Klebsiella</taxon>
        <taxon>Klebsiella pneumoniae complex</taxon>
    </lineage>
</organism>
<name>G3P_KLEPN</name>
<protein>
    <recommendedName>
        <fullName evidence="1">Glyceraldehyde-3-phosphate dehydrogenase</fullName>
        <shortName evidence="1">GAPDH</shortName>
        <ecNumber evidence="1">1.2.1.12</ecNumber>
    </recommendedName>
    <alternativeName>
        <fullName evidence="1">NAD-dependent glyceraldehyde-3-phosphate dehydrogenase</fullName>
    </alternativeName>
</protein>
<accession>P24164</accession>
<gene>
    <name type="primary">gap</name>
</gene>
<sequence length="303" mass="32306">INGFGRIGRIVFRAAQKRSDIEIVAINDLLDAEYMAYMLKYDSTHGRFDGTVEVKDGHLVVNGKKIRVTAERDPANLKWDEVGVDVVAEATGIFLTDETARKHITAGAKKVVLTGPSKDNTPMFVRGANFDAYAGQDIVSNASCTTNCLAPLAKVINDNFGIVEGLMTTVHATTATQKTVDGPSHKDWRGGRGAAQNIIPSSTGAAKAVGKVLPELNGKLTGMAFRVPTPNVSVVDLTVRLEKAASYEEIKKAIKAASEGAMKGVLGYTEDDVVSTDFNGEVCTSVFDAKAGIALNDNFVKLV</sequence>
<comment type="function">
    <text evidence="1">Catalyzes the oxidative phosphorylation of glyceraldehyde 3-phosphate (G3P) to 1,3-bisphosphoglycerate (BPG) using the cofactor NAD. The first reaction step involves the formation of a hemiacetal intermediate between G3P and a cysteine residue, and this hemiacetal intermediate is then oxidized to a thioester, with concomitant reduction of NAD to NADH. The reduced NADH is then exchanged with the second NAD, and the thioester is attacked by a nucleophilic inorganic phosphate to produce BPG.</text>
</comment>
<comment type="catalytic activity">
    <reaction evidence="1">
        <text>D-glyceraldehyde 3-phosphate + phosphate + NAD(+) = (2R)-3-phospho-glyceroyl phosphate + NADH + H(+)</text>
        <dbReference type="Rhea" id="RHEA:10300"/>
        <dbReference type="ChEBI" id="CHEBI:15378"/>
        <dbReference type="ChEBI" id="CHEBI:43474"/>
        <dbReference type="ChEBI" id="CHEBI:57540"/>
        <dbReference type="ChEBI" id="CHEBI:57604"/>
        <dbReference type="ChEBI" id="CHEBI:57945"/>
        <dbReference type="ChEBI" id="CHEBI:59776"/>
        <dbReference type="EC" id="1.2.1.12"/>
    </reaction>
</comment>
<comment type="pathway">
    <text evidence="2">Carbohydrate degradation; glycolysis; pyruvate from D-glyceraldehyde 3-phosphate: step 1/5.</text>
</comment>
<comment type="subunit">
    <text evidence="1">Homotetramer.</text>
</comment>
<comment type="subcellular location">
    <subcellularLocation>
        <location evidence="2">Cytoplasm</location>
    </subcellularLocation>
</comment>
<comment type="similarity">
    <text evidence="2">Belongs to the glyceraldehyde-3-phosphate dehydrogenase family.</text>
</comment>
<proteinExistence type="inferred from homology"/>
<feature type="chain" id="PRO_0000145664" description="Glyceraldehyde-3-phosphate dehydrogenase">
    <location>
        <begin position="1" status="less than"/>
        <end position="303" status="greater than"/>
    </location>
</feature>
<feature type="active site" description="Nucleophile" evidence="1">
    <location>
        <position position="144"/>
    </location>
</feature>
<feature type="binding site" evidence="1">
    <location>
        <begin position="6"/>
        <end position="7"/>
    </location>
    <ligand>
        <name>NAD(+)</name>
        <dbReference type="ChEBI" id="CHEBI:57540"/>
    </ligand>
</feature>
<feature type="binding site" evidence="1">
    <location>
        <position position="28"/>
    </location>
    <ligand>
        <name>NAD(+)</name>
        <dbReference type="ChEBI" id="CHEBI:57540"/>
    </ligand>
</feature>
<feature type="binding site" evidence="1">
    <location>
        <position position="72"/>
    </location>
    <ligand>
        <name>NAD(+)</name>
        <dbReference type="ChEBI" id="CHEBI:57540"/>
    </ligand>
</feature>
<feature type="binding site" evidence="1">
    <location>
        <position position="114"/>
    </location>
    <ligand>
        <name>NAD(+)</name>
        <dbReference type="ChEBI" id="CHEBI:57540"/>
    </ligand>
</feature>
<feature type="binding site" evidence="1">
    <location>
        <begin position="143"/>
        <end position="145"/>
    </location>
    <ligand>
        <name>D-glyceraldehyde 3-phosphate</name>
        <dbReference type="ChEBI" id="CHEBI:59776"/>
    </ligand>
</feature>
<feature type="binding site" evidence="1">
    <location>
        <position position="174"/>
    </location>
    <ligand>
        <name>D-glyceraldehyde 3-phosphate</name>
        <dbReference type="ChEBI" id="CHEBI:59776"/>
    </ligand>
</feature>
<feature type="binding site" evidence="1">
    <location>
        <begin position="203"/>
        <end position="204"/>
    </location>
    <ligand>
        <name>D-glyceraldehyde 3-phosphate</name>
        <dbReference type="ChEBI" id="CHEBI:59776"/>
    </ligand>
</feature>
<feature type="binding site" evidence="1">
    <location>
        <position position="226"/>
    </location>
    <ligand>
        <name>D-glyceraldehyde 3-phosphate</name>
        <dbReference type="ChEBI" id="CHEBI:59776"/>
    </ligand>
</feature>
<feature type="site" description="Activates thiol group during catalysis" evidence="1">
    <location>
        <position position="171"/>
    </location>
</feature>
<feature type="non-terminal residue">
    <location>
        <position position="1"/>
    </location>
</feature>
<feature type="non-terminal residue">
    <location>
        <position position="303"/>
    </location>
</feature>
<dbReference type="EC" id="1.2.1.12" evidence="1"/>
<dbReference type="EMBL" id="M66869">
    <property type="protein sequence ID" value="AAA25069.1"/>
    <property type="status" value="ALT_TERM"/>
    <property type="molecule type" value="Genomic_DNA"/>
</dbReference>
<dbReference type="EMBL" id="M63371">
    <property type="protein sequence ID" value="AAA25068.1"/>
    <property type="molecule type" value="Genomic_DNA"/>
</dbReference>
<dbReference type="SMR" id="P24164"/>
<dbReference type="UniPathway" id="UPA00109">
    <property type="reaction ID" value="UER00184"/>
</dbReference>
<dbReference type="GO" id="GO:0005737">
    <property type="term" value="C:cytoplasm"/>
    <property type="evidence" value="ECO:0007669"/>
    <property type="project" value="UniProtKB-SubCell"/>
</dbReference>
<dbReference type="GO" id="GO:0004365">
    <property type="term" value="F:glyceraldehyde-3-phosphate dehydrogenase (NAD+) (phosphorylating) activity"/>
    <property type="evidence" value="ECO:0000250"/>
    <property type="project" value="UniProtKB"/>
</dbReference>
<dbReference type="GO" id="GO:0051287">
    <property type="term" value="F:NAD binding"/>
    <property type="evidence" value="ECO:0000250"/>
    <property type="project" value="UniProtKB"/>
</dbReference>
<dbReference type="GO" id="GO:0050661">
    <property type="term" value="F:NADP binding"/>
    <property type="evidence" value="ECO:0007669"/>
    <property type="project" value="InterPro"/>
</dbReference>
<dbReference type="GO" id="GO:0006006">
    <property type="term" value="P:glucose metabolic process"/>
    <property type="evidence" value="ECO:0007669"/>
    <property type="project" value="InterPro"/>
</dbReference>
<dbReference type="GO" id="GO:0006096">
    <property type="term" value="P:glycolytic process"/>
    <property type="evidence" value="ECO:0007669"/>
    <property type="project" value="UniProtKB-UniPathway"/>
</dbReference>
<dbReference type="CDD" id="cd18126">
    <property type="entry name" value="GAPDH_I_C"/>
    <property type="match status" value="1"/>
</dbReference>
<dbReference type="CDD" id="cd05214">
    <property type="entry name" value="GAPDH_I_N"/>
    <property type="match status" value="1"/>
</dbReference>
<dbReference type="FunFam" id="3.30.360.10:FF:000001">
    <property type="entry name" value="Glyceraldehyde-3-phosphate dehydrogenase"/>
    <property type="match status" value="1"/>
</dbReference>
<dbReference type="FunFam" id="3.40.50.720:FF:000001">
    <property type="entry name" value="Glyceraldehyde-3-phosphate dehydrogenase"/>
    <property type="match status" value="1"/>
</dbReference>
<dbReference type="Gene3D" id="3.30.360.10">
    <property type="entry name" value="Dihydrodipicolinate Reductase, domain 2"/>
    <property type="match status" value="1"/>
</dbReference>
<dbReference type="Gene3D" id="3.40.50.720">
    <property type="entry name" value="NAD(P)-binding Rossmann-like Domain"/>
    <property type="match status" value="1"/>
</dbReference>
<dbReference type="InterPro" id="IPR020831">
    <property type="entry name" value="GlycerAld/Erythrose_P_DH"/>
</dbReference>
<dbReference type="InterPro" id="IPR020830">
    <property type="entry name" value="GlycerAld_3-P_DH_AS"/>
</dbReference>
<dbReference type="InterPro" id="IPR020829">
    <property type="entry name" value="GlycerAld_3-P_DH_cat"/>
</dbReference>
<dbReference type="InterPro" id="IPR020828">
    <property type="entry name" value="GlycerAld_3-P_DH_NAD(P)-bd"/>
</dbReference>
<dbReference type="InterPro" id="IPR006424">
    <property type="entry name" value="Glyceraldehyde-3-P_DH_1"/>
</dbReference>
<dbReference type="InterPro" id="IPR036291">
    <property type="entry name" value="NAD(P)-bd_dom_sf"/>
</dbReference>
<dbReference type="NCBIfam" id="TIGR01534">
    <property type="entry name" value="GAPDH-I"/>
    <property type="match status" value="1"/>
</dbReference>
<dbReference type="NCBIfam" id="NF011954">
    <property type="entry name" value="PRK15425.1"/>
    <property type="match status" value="1"/>
</dbReference>
<dbReference type="PANTHER" id="PTHR10836">
    <property type="entry name" value="GLYCERALDEHYDE 3-PHOSPHATE DEHYDROGENASE"/>
    <property type="match status" value="1"/>
</dbReference>
<dbReference type="PANTHER" id="PTHR10836:SF76">
    <property type="entry name" value="GLYCERALDEHYDE-3-PHOSPHATE DEHYDROGENASE-RELATED"/>
    <property type="match status" value="1"/>
</dbReference>
<dbReference type="Pfam" id="PF02800">
    <property type="entry name" value="Gp_dh_C"/>
    <property type="match status" value="1"/>
</dbReference>
<dbReference type="Pfam" id="PF00044">
    <property type="entry name" value="Gp_dh_N"/>
    <property type="match status" value="1"/>
</dbReference>
<dbReference type="PIRSF" id="PIRSF000149">
    <property type="entry name" value="GAP_DH"/>
    <property type="match status" value="1"/>
</dbReference>
<dbReference type="PRINTS" id="PR00078">
    <property type="entry name" value="G3PDHDRGNASE"/>
</dbReference>
<dbReference type="SMART" id="SM00846">
    <property type="entry name" value="Gp_dh_N"/>
    <property type="match status" value="1"/>
</dbReference>
<dbReference type="SUPFAM" id="SSF55347">
    <property type="entry name" value="Glyceraldehyde-3-phosphate dehydrogenase-like, C-terminal domain"/>
    <property type="match status" value="1"/>
</dbReference>
<dbReference type="SUPFAM" id="SSF51735">
    <property type="entry name" value="NAD(P)-binding Rossmann-fold domains"/>
    <property type="match status" value="1"/>
</dbReference>
<dbReference type="PROSITE" id="PS00071">
    <property type="entry name" value="GAPDH"/>
    <property type="match status" value="1"/>
</dbReference>
<keyword id="KW-0963">Cytoplasm</keyword>
<keyword id="KW-0324">Glycolysis</keyword>
<keyword id="KW-0520">NAD</keyword>
<keyword id="KW-0547">Nucleotide-binding</keyword>
<keyword id="KW-0560">Oxidoreductase</keyword>
<evidence type="ECO:0000250" key="1">
    <source>
        <dbReference type="UniProtKB" id="P0A9B2"/>
    </source>
</evidence>
<evidence type="ECO:0000305" key="2"/>
<reference key="1">
    <citation type="journal article" date="1991" name="Proc. Natl. Acad. Sci. U.S.A.">
        <title>Nucleotide polymorphism and evolution in the glyceraldehyde-3-phosphate dehydrogenase gene (gapA) in natural populations of Salmonella and Escherichia coli.</title>
        <authorList>
            <person name="Nelson K."/>
            <person name="Whittam T.S."/>
            <person name="Selander R.K."/>
        </authorList>
    </citation>
    <scope>NUCLEOTIDE SEQUENCE [GENOMIC DNA]</scope>
    <source>
        <strain>ATCC 13883 / DSM 30104 / JCM 1662 / NBRC 14940 / NCIMB 13281 / NCTC 9633</strain>
    </source>
</reference>
<reference key="2">
    <citation type="journal article" date="1991" name="J. Gen. Microbiol.">
        <title>Molecular and evolutionary relationships among enteric bacteria.</title>
        <authorList>
            <person name="Lawrence J.G."/>
            <person name="Ochman H."/>
            <person name="Hartl D.L."/>
        </authorList>
    </citation>
    <scope>NUCLEOTIDE SEQUENCE [GENOMIC DNA] OF 10-303</scope>
    <source>
        <strain>LD119</strain>
    </source>
</reference>